<proteinExistence type="inferred from homology"/>
<comment type="function">
    <text evidence="1">Phosphorylation of dTMP to form dTDP in both de novo and salvage pathways of dTTP synthesis.</text>
</comment>
<comment type="catalytic activity">
    <reaction evidence="1">
        <text>dTMP + ATP = dTDP + ADP</text>
        <dbReference type="Rhea" id="RHEA:13517"/>
        <dbReference type="ChEBI" id="CHEBI:30616"/>
        <dbReference type="ChEBI" id="CHEBI:58369"/>
        <dbReference type="ChEBI" id="CHEBI:63528"/>
        <dbReference type="ChEBI" id="CHEBI:456216"/>
        <dbReference type="EC" id="2.7.4.9"/>
    </reaction>
</comment>
<comment type="similarity">
    <text evidence="1">Belongs to the thymidylate kinase family.</text>
</comment>
<organism>
    <name type="scientific">Pseudoalteromonas translucida (strain TAC 125)</name>
    <dbReference type="NCBI Taxonomy" id="326442"/>
    <lineage>
        <taxon>Bacteria</taxon>
        <taxon>Pseudomonadati</taxon>
        <taxon>Pseudomonadota</taxon>
        <taxon>Gammaproteobacteria</taxon>
        <taxon>Alteromonadales</taxon>
        <taxon>Pseudoalteromonadaceae</taxon>
        <taxon>Pseudoalteromonas</taxon>
    </lineage>
</organism>
<name>KTHY_PSET1</name>
<dbReference type="EC" id="2.7.4.9" evidence="1"/>
<dbReference type="EMBL" id="CR954246">
    <property type="protein sequence ID" value="CAI86875.1"/>
    <property type="molecule type" value="Genomic_DNA"/>
</dbReference>
<dbReference type="SMR" id="Q3IHC1"/>
<dbReference type="STRING" id="326442.PSHAa1803"/>
<dbReference type="KEGG" id="pha:PSHAa1803"/>
<dbReference type="PATRIC" id="fig|326442.8.peg.1750"/>
<dbReference type="eggNOG" id="COG0125">
    <property type="taxonomic scope" value="Bacteria"/>
</dbReference>
<dbReference type="HOGENOM" id="CLU_049131_0_1_6"/>
<dbReference type="BioCyc" id="PHAL326442:PSHA_RS08840-MONOMER"/>
<dbReference type="Proteomes" id="UP000006843">
    <property type="component" value="Chromosome I"/>
</dbReference>
<dbReference type="GO" id="GO:0005829">
    <property type="term" value="C:cytosol"/>
    <property type="evidence" value="ECO:0007669"/>
    <property type="project" value="TreeGrafter"/>
</dbReference>
<dbReference type="GO" id="GO:0005524">
    <property type="term" value="F:ATP binding"/>
    <property type="evidence" value="ECO:0007669"/>
    <property type="project" value="UniProtKB-UniRule"/>
</dbReference>
<dbReference type="GO" id="GO:0004798">
    <property type="term" value="F:dTMP kinase activity"/>
    <property type="evidence" value="ECO:0007669"/>
    <property type="project" value="UniProtKB-UniRule"/>
</dbReference>
<dbReference type="GO" id="GO:0006233">
    <property type="term" value="P:dTDP biosynthetic process"/>
    <property type="evidence" value="ECO:0007669"/>
    <property type="project" value="InterPro"/>
</dbReference>
<dbReference type="GO" id="GO:0006235">
    <property type="term" value="P:dTTP biosynthetic process"/>
    <property type="evidence" value="ECO:0007669"/>
    <property type="project" value="UniProtKB-UniRule"/>
</dbReference>
<dbReference type="GO" id="GO:0006227">
    <property type="term" value="P:dUDP biosynthetic process"/>
    <property type="evidence" value="ECO:0007669"/>
    <property type="project" value="TreeGrafter"/>
</dbReference>
<dbReference type="CDD" id="cd01672">
    <property type="entry name" value="TMPK"/>
    <property type="match status" value="1"/>
</dbReference>
<dbReference type="FunFam" id="3.40.50.300:FF:000321">
    <property type="entry name" value="Thymidylate kinase"/>
    <property type="match status" value="1"/>
</dbReference>
<dbReference type="Gene3D" id="3.40.50.300">
    <property type="entry name" value="P-loop containing nucleotide triphosphate hydrolases"/>
    <property type="match status" value="1"/>
</dbReference>
<dbReference type="HAMAP" id="MF_00165">
    <property type="entry name" value="Thymidylate_kinase"/>
    <property type="match status" value="1"/>
</dbReference>
<dbReference type="InterPro" id="IPR027417">
    <property type="entry name" value="P-loop_NTPase"/>
</dbReference>
<dbReference type="InterPro" id="IPR039430">
    <property type="entry name" value="Thymidylate_kin-like_dom"/>
</dbReference>
<dbReference type="InterPro" id="IPR018094">
    <property type="entry name" value="Thymidylate_kinase"/>
</dbReference>
<dbReference type="NCBIfam" id="TIGR00041">
    <property type="entry name" value="DTMP_kinase"/>
    <property type="match status" value="1"/>
</dbReference>
<dbReference type="PANTHER" id="PTHR10344">
    <property type="entry name" value="THYMIDYLATE KINASE"/>
    <property type="match status" value="1"/>
</dbReference>
<dbReference type="PANTHER" id="PTHR10344:SF4">
    <property type="entry name" value="UMP-CMP KINASE 2, MITOCHONDRIAL"/>
    <property type="match status" value="1"/>
</dbReference>
<dbReference type="Pfam" id="PF02223">
    <property type="entry name" value="Thymidylate_kin"/>
    <property type="match status" value="1"/>
</dbReference>
<dbReference type="SUPFAM" id="SSF52540">
    <property type="entry name" value="P-loop containing nucleoside triphosphate hydrolases"/>
    <property type="match status" value="1"/>
</dbReference>
<protein>
    <recommendedName>
        <fullName evidence="1">Thymidylate kinase</fullName>
        <ecNumber evidence="1">2.7.4.9</ecNumber>
    </recommendedName>
    <alternativeName>
        <fullName evidence="1">dTMP kinase</fullName>
    </alternativeName>
</protein>
<evidence type="ECO:0000255" key="1">
    <source>
        <dbReference type="HAMAP-Rule" id="MF_00165"/>
    </source>
</evidence>
<keyword id="KW-0067">ATP-binding</keyword>
<keyword id="KW-0418">Kinase</keyword>
<keyword id="KW-0545">Nucleotide biosynthesis</keyword>
<keyword id="KW-0547">Nucleotide-binding</keyword>
<keyword id="KW-1185">Reference proteome</keyword>
<keyword id="KW-0808">Transferase</keyword>
<sequence length="208" mass="23254">MKPKFIVIEGLEGAGKSTAIALCQSFLNSKKIDFINVREPGGTPLAESLRTLVKAQHDEEIAFETELLIMYAARSQLMHNVINPALEQGQWVLADRHDLSSQAYQGGGRGISANTLASLSSMVLKGLKPDLTIYLDIDPVIGLERAKGRGELDRIEQEAIEFFQRTRMRYLELANDDNSIKTVDANQSIEHVHRDITNVLRTFFAEQK</sequence>
<reference key="1">
    <citation type="journal article" date="2005" name="Genome Res.">
        <title>Coping with cold: the genome of the versatile marine Antarctica bacterium Pseudoalteromonas haloplanktis TAC125.</title>
        <authorList>
            <person name="Medigue C."/>
            <person name="Krin E."/>
            <person name="Pascal G."/>
            <person name="Barbe V."/>
            <person name="Bernsel A."/>
            <person name="Bertin P.N."/>
            <person name="Cheung F."/>
            <person name="Cruveiller S."/>
            <person name="D'Amico S."/>
            <person name="Duilio A."/>
            <person name="Fang G."/>
            <person name="Feller G."/>
            <person name="Ho C."/>
            <person name="Mangenot S."/>
            <person name="Marino G."/>
            <person name="Nilsson J."/>
            <person name="Parrilli E."/>
            <person name="Rocha E.P.C."/>
            <person name="Rouy Z."/>
            <person name="Sekowska A."/>
            <person name="Tutino M.L."/>
            <person name="Vallenet D."/>
            <person name="von Heijne G."/>
            <person name="Danchin A."/>
        </authorList>
    </citation>
    <scope>NUCLEOTIDE SEQUENCE [LARGE SCALE GENOMIC DNA]</scope>
    <source>
        <strain>TAC 125</strain>
    </source>
</reference>
<accession>Q3IHC1</accession>
<feature type="chain" id="PRO_1000023257" description="Thymidylate kinase">
    <location>
        <begin position="1"/>
        <end position="208"/>
    </location>
</feature>
<feature type="binding site" evidence="1">
    <location>
        <begin position="10"/>
        <end position="17"/>
    </location>
    <ligand>
        <name>ATP</name>
        <dbReference type="ChEBI" id="CHEBI:30616"/>
    </ligand>
</feature>
<gene>
    <name evidence="1" type="primary">tmk</name>
    <name type="ordered locus">PSHAa1803</name>
</gene>